<evidence type="ECO:0000250" key="1"/>
<evidence type="ECO:0000305" key="2"/>
<feature type="chain" id="PRO_0000331558" description="Mitochondrial import inner membrane translocase subunit Tim9">
    <location>
        <begin position="1"/>
        <end position="84"/>
    </location>
</feature>
<feature type="short sequence motif" description="Twin CX3C motif">
    <location>
        <begin position="36"/>
        <end position="60"/>
    </location>
</feature>
<feature type="disulfide bond" evidence="1">
    <location>
        <begin position="36"/>
        <end position="60"/>
    </location>
</feature>
<feature type="disulfide bond" evidence="1">
    <location>
        <begin position="40"/>
        <end position="56"/>
    </location>
</feature>
<dbReference type="EMBL" id="AAFI02000008">
    <property type="protein sequence ID" value="EAL71103.1"/>
    <property type="molecule type" value="Genomic_DNA"/>
</dbReference>
<dbReference type="RefSeq" id="XP_644845.1">
    <property type="nucleotide sequence ID" value="XM_639753.1"/>
</dbReference>
<dbReference type="SMR" id="Q559H1"/>
<dbReference type="FunCoup" id="Q559H1">
    <property type="interactions" value="26"/>
</dbReference>
<dbReference type="STRING" id="44689.Q559H1"/>
<dbReference type="PaxDb" id="44689-DDB0252731"/>
<dbReference type="EnsemblProtists" id="EAL71103">
    <property type="protein sequence ID" value="EAL71103"/>
    <property type="gene ID" value="DDB_G0272931"/>
</dbReference>
<dbReference type="GeneID" id="8618526"/>
<dbReference type="KEGG" id="ddi:DDB_G0272931"/>
<dbReference type="dictyBase" id="DDB_G0272931">
    <property type="gene designation" value="timm9"/>
</dbReference>
<dbReference type="VEuPathDB" id="AmoebaDB:DDB_G0272931"/>
<dbReference type="eggNOG" id="ENOG502RI8Z">
    <property type="taxonomic scope" value="Eukaryota"/>
</dbReference>
<dbReference type="HOGENOM" id="CLU_141397_3_2_1"/>
<dbReference type="InParanoid" id="Q559H1"/>
<dbReference type="OMA" id="CITNFRI"/>
<dbReference type="PhylomeDB" id="Q559H1"/>
<dbReference type="Reactome" id="R-DDI-1268020">
    <property type="pathway name" value="Mitochondrial protein import"/>
</dbReference>
<dbReference type="PRO" id="PR:Q559H1"/>
<dbReference type="Proteomes" id="UP000002195">
    <property type="component" value="Chromosome 2"/>
</dbReference>
<dbReference type="GO" id="GO:0005743">
    <property type="term" value="C:mitochondrial inner membrane"/>
    <property type="evidence" value="ECO:0007669"/>
    <property type="project" value="UniProtKB-SubCell"/>
</dbReference>
<dbReference type="GO" id="GO:0042719">
    <property type="term" value="C:mitochondrial intermembrane space protein transporter complex"/>
    <property type="evidence" value="ECO:0000250"/>
    <property type="project" value="dictyBase"/>
</dbReference>
<dbReference type="GO" id="GO:0046872">
    <property type="term" value="F:metal ion binding"/>
    <property type="evidence" value="ECO:0007669"/>
    <property type="project" value="UniProtKB-KW"/>
</dbReference>
<dbReference type="GO" id="GO:0045039">
    <property type="term" value="P:protein insertion into mitochondrial inner membrane"/>
    <property type="evidence" value="ECO:0000250"/>
    <property type="project" value="dictyBase"/>
</dbReference>
<dbReference type="Gene3D" id="1.10.287.810">
    <property type="entry name" value="Mitochondrial import inner membrane translocase subunit tim13 like domains"/>
    <property type="match status" value="1"/>
</dbReference>
<dbReference type="InterPro" id="IPR050673">
    <property type="entry name" value="Mito_inner_translocase_sub"/>
</dbReference>
<dbReference type="InterPro" id="IPR004217">
    <property type="entry name" value="Tim10-like"/>
</dbReference>
<dbReference type="InterPro" id="IPR035427">
    <property type="entry name" value="Tim10-like_dom_sf"/>
</dbReference>
<dbReference type="PANTHER" id="PTHR13172">
    <property type="entry name" value="MITOCHONDRIAL IMPORT INNER MEMBRANE TRANSLOCASE SUBUNIT TIM9B"/>
    <property type="match status" value="1"/>
</dbReference>
<dbReference type="Pfam" id="PF02953">
    <property type="entry name" value="zf-Tim10_DDP"/>
    <property type="match status" value="1"/>
</dbReference>
<dbReference type="SUPFAM" id="SSF144122">
    <property type="entry name" value="Tim10-like"/>
    <property type="match status" value="1"/>
</dbReference>
<organism>
    <name type="scientific">Dictyostelium discoideum</name>
    <name type="common">Social amoeba</name>
    <dbReference type="NCBI Taxonomy" id="44689"/>
    <lineage>
        <taxon>Eukaryota</taxon>
        <taxon>Amoebozoa</taxon>
        <taxon>Evosea</taxon>
        <taxon>Eumycetozoa</taxon>
        <taxon>Dictyostelia</taxon>
        <taxon>Dictyosteliales</taxon>
        <taxon>Dictyosteliaceae</taxon>
        <taxon>Dictyostelium</taxon>
    </lineage>
</organism>
<accession>Q559H1</accession>
<accession>Q86JC2</accession>
<reference key="1">
    <citation type="journal article" date="2002" name="Nature">
        <title>Sequence and analysis of chromosome 2 of Dictyostelium discoideum.</title>
        <authorList>
            <person name="Gloeckner G."/>
            <person name="Eichinger L."/>
            <person name="Szafranski K."/>
            <person name="Pachebat J.A."/>
            <person name="Bankier A.T."/>
            <person name="Dear P.H."/>
            <person name="Lehmann R."/>
            <person name="Baumgart C."/>
            <person name="Parra G."/>
            <person name="Abril J.F."/>
            <person name="Guigo R."/>
            <person name="Kumpf K."/>
            <person name="Tunggal B."/>
            <person name="Cox E.C."/>
            <person name="Quail M.A."/>
            <person name="Platzer M."/>
            <person name="Rosenthal A."/>
            <person name="Noegel A.A."/>
        </authorList>
    </citation>
    <scope>NUCLEOTIDE SEQUENCE [LARGE SCALE GENOMIC DNA]</scope>
    <source>
        <strain>AX4</strain>
    </source>
</reference>
<reference key="2">
    <citation type="journal article" date="2005" name="Nature">
        <title>The genome of the social amoeba Dictyostelium discoideum.</title>
        <authorList>
            <person name="Eichinger L."/>
            <person name="Pachebat J.A."/>
            <person name="Gloeckner G."/>
            <person name="Rajandream M.A."/>
            <person name="Sucgang R."/>
            <person name="Berriman M."/>
            <person name="Song J."/>
            <person name="Olsen R."/>
            <person name="Szafranski K."/>
            <person name="Xu Q."/>
            <person name="Tunggal B."/>
            <person name="Kummerfeld S."/>
            <person name="Madera M."/>
            <person name="Konfortov B.A."/>
            <person name="Rivero F."/>
            <person name="Bankier A.T."/>
            <person name="Lehmann R."/>
            <person name="Hamlin N."/>
            <person name="Davies R."/>
            <person name="Gaudet P."/>
            <person name="Fey P."/>
            <person name="Pilcher K."/>
            <person name="Chen G."/>
            <person name="Saunders D."/>
            <person name="Sodergren E.J."/>
            <person name="Davis P."/>
            <person name="Kerhornou A."/>
            <person name="Nie X."/>
            <person name="Hall N."/>
            <person name="Anjard C."/>
            <person name="Hemphill L."/>
            <person name="Bason N."/>
            <person name="Farbrother P."/>
            <person name="Desany B."/>
            <person name="Just E."/>
            <person name="Morio T."/>
            <person name="Rost R."/>
            <person name="Churcher C.M."/>
            <person name="Cooper J."/>
            <person name="Haydock S."/>
            <person name="van Driessche N."/>
            <person name="Cronin A."/>
            <person name="Goodhead I."/>
            <person name="Muzny D.M."/>
            <person name="Mourier T."/>
            <person name="Pain A."/>
            <person name="Lu M."/>
            <person name="Harper D."/>
            <person name="Lindsay R."/>
            <person name="Hauser H."/>
            <person name="James K.D."/>
            <person name="Quiles M."/>
            <person name="Madan Babu M."/>
            <person name="Saito T."/>
            <person name="Buchrieser C."/>
            <person name="Wardroper A."/>
            <person name="Felder M."/>
            <person name="Thangavelu M."/>
            <person name="Johnson D."/>
            <person name="Knights A."/>
            <person name="Loulseged H."/>
            <person name="Mungall K.L."/>
            <person name="Oliver K."/>
            <person name="Price C."/>
            <person name="Quail M.A."/>
            <person name="Urushihara H."/>
            <person name="Hernandez J."/>
            <person name="Rabbinowitsch E."/>
            <person name="Steffen D."/>
            <person name="Sanders M."/>
            <person name="Ma J."/>
            <person name="Kohara Y."/>
            <person name="Sharp S."/>
            <person name="Simmonds M.N."/>
            <person name="Spiegler S."/>
            <person name="Tivey A."/>
            <person name="Sugano S."/>
            <person name="White B."/>
            <person name="Walker D."/>
            <person name="Woodward J.R."/>
            <person name="Winckler T."/>
            <person name="Tanaka Y."/>
            <person name="Shaulsky G."/>
            <person name="Schleicher M."/>
            <person name="Weinstock G.M."/>
            <person name="Rosenthal A."/>
            <person name="Cox E.C."/>
            <person name="Chisholm R.L."/>
            <person name="Gibbs R.A."/>
            <person name="Loomis W.F."/>
            <person name="Platzer M."/>
            <person name="Kay R.R."/>
            <person name="Williams J.G."/>
            <person name="Dear P.H."/>
            <person name="Noegel A.A."/>
            <person name="Barrell B.G."/>
            <person name="Kuspa A."/>
        </authorList>
    </citation>
    <scope>NUCLEOTIDE SEQUENCE [LARGE SCALE GENOMIC DNA]</scope>
    <source>
        <strain>AX4</strain>
    </source>
</reference>
<gene>
    <name type="primary">timm9</name>
    <name type="synonym">tim9</name>
    <name type="ORF">DDB_G0272931</name>
</gene>
<protein>
    <recommendedName>
        <fullName>Mitochondrial import inner membrane translocase subunit Tim9</fullName>
    </recommendedName>
</protein>
<sequence length="84" mass="10063">MDRRLSKKEEERIVNELNKLQMIEMVDTSVNLTNKCFQSCITNFRIRKLDDEEQLCVYKCVEKNMFFTSALNNHFMKLSNEGMF</sequence>
<proteinExistence type="inferred from homology"/>
<comment type="function">
    <text evidence="1">Component of the TIM22 complex, a complex that mediates the import and insertion of multi-pass transmembrane proteins into the mitochondrial inner membrane. The TIM22 complex forms a twin-pore translocase that uses the membrane potential as external driving force (By similarity).</text>
</comment>
<comment type="subunit">
    <text evidence="1">Heterohexamer; composed of 3 copies of timm9 and 3 copies of timm10, named soluble 70 kDa complex. Associates directly with the TIM22 complex, whose core is composed of timm22. Interacts with the transmembrane regions of multi-pass transmembrane proteins in transit (By similarity).</text>
</comment>
<comment type="subcellular location">
    <subcellularLocation>
        <location evidence="1">Mitochondrion inner membrane</location>
        <topology evidence="1">Peripheral membrane protein</topology>
    </subcellularLocation>
</comment>
<comment type="domain">
    <text evidence="1">The twin CX3C motif contains 4 conserved Cys residues that form 2 disulfide bonds in the mitochondrial intermembrane space. However, during the transit of timm9/timm10 from cytoplasm into mitochondrion, the Cys residues probably coordinate zinc, thereby preventing folding and allowing its transfer across mitochondrial outer membrane (By similarity).</text>
</comment>
<comment type="similarity">
    <text evidence="2">Belongs to the small Tim family.</text>
</comment>
<name>TIM9_DICDI</name>
<keyword id="KW-1015">Disulfide bond</keyword>
<keyword id="KW-0472">Membrane</keyword>
<keyword id="KW-0479">Metal-binding</keyword>
<keyword id="KW-0496">Mitochondrion</keyword>
<keyword id="KW-0999">Mitochondrion inner membrane</keyword>
<keyword id="KW-0653">Protein transport</keyword>
<keyword id="KW-1185">Reference proteome</keyword>
<keyword id="KW-0811">Translocation</keyword>
<keyword id="KW-0813">Transport</keyword>
<keyword id="KW-0862">Zinc</keyword>